<accession>Q12T11</accession>
<dbReference type="EMBL" id="CP000302">
    <property type="protein sequence ID" value="ABE53415.1"/>
    <property type="molecule type" value="Genomic_DNA"/>
</dbReference>
<dbReference type="RefSeq" id="WP_011494584.1">
    <property type="nucleotide sequence ID" value="NC_007954.1"/>
</dbReference>
<dbReference type="SMR" id="Q12T11"/>
<dbReference type="STRING" id="318161.Sden_0118"/>
<dbReference type="KEGG" id="sdn:Sden_0118"/>
<dbReference type="eggNOG" id="COG1281">
    <property type="taxonomic scope" value="Bacteria"/>
</dbReference>
<dbReference type="HOGENOM" id="CLU_054493_0_0_6"/>
<dbReference type="OrthoDB" id="9793753at2"/>
<dbReference type="Proteomes" id="UP000001982">
    <property type="component" value="Chromosome"/>
</dbReference>
<dbReference type="GO" id="GO:0005737">
    <property type="term" value="C:cytoplasm"/>
    <property type="evidence" value="ECO:0007669"/>
    <property type="project" value="UniProtKB-SubCell"/>
</dbReference>
<dbReference type="GO" id="GO:0044183">
    <property type="term" value="F:protein folding chaperone"/>
    <property type="evidence" value="ECO:0007669"/>
    <property type="project" value="TreeGrafter"/>
</dbReference>
<dbReference type="GO" id="GO:0051082">
    <property type="term" value="F:unfolded protein binding"/>
    <property type="evidence" value="ECO:0007669"/>
    <property type="project" value="UniProtKB-UniRule"/>
</dbReference>
<dbReference type="GO" id="GO:0042026">
    <property type="term" value="P:protein refolding"/>
    <property type="evidence" value="ECO:0007669"/>
    <property type="project" value="TreeGrafter"/>
</dbReference>
<dbReference type="CDD" id="cd00498">
    <property type="entry name" value="Hsp33"/>
    <property type="match status" value="1"/>
</dbReference>
<dbReference type="Gene3D" id="1.10.287.480">
    <property type="entry name" value="helix hairpin bin"/>
    <property type="match status" value="1"/>
</dbReference>
<dbReference type="Gene3D" id="3.55.30.10">
    <property type="entry name" value="Hsp33 domain"/>
    <property type="match status" value="1"/>
</dbReference>
<dbReference type="Gene3D" id="3.90.1280.10">
    <property type="entry name" value="HSP33 redox switch-like"/>
    <property type="match status" value="1"/>
</dbReference>
<dbReference type="HAMAP" id="MF_00117">
    <property type="entry name" value="HslO"/>
    <property type="match status" value="1"/>
</dbReference>
<dbReference type="InterPro" id="IPR000397">
    <property type="entry name" value="Heat_shock_Hsp33"/>
</dbReference>
<dbReference type="InterPro" id="IPR016154">
    <property type="entry name" value="Heat_shock_Hsp33_C"/>
</dbReference>
<dbReference type="InterPro" id="IPR016153">
    <property type="entry name" value="Heat_shock_Hsp33_N"/>
</dbReference>
<dbReference type="InterPro" id="IPR023212">
    <property type="entry name" value="Hsp33_helix_hairpin_bin_dom_sf"/>
</dbReference>
<dbReference type="NCBIfam" id="NF001033">
    <property type="entry name" value="PRK00114.1"/>
    <property type="match status" value="1"/>
</dbReference>
<dbReference type="PANTHER" id="PTHR30111">
    <property type="entry name" value="33 KDA CHAPERONIN"/>
    <property type="match status" value="1"/>
</dbReference>
<dbReference type="PANTHER" id="PTHR30111:SF1">
    <property type="entry name" value="33 KDA CHAPERONIN"/>
    <property type="match status" value="1"/>
</dbReference>
<dbReference type="Pfam" id="PF01430">
    <property type="entry name" value="HSP33"/>
    <property type="match status" value="1"/>
</dbReference>
<dbReference type="PIRSF" id="PIRSF005261">
    <property type="entry name" value="Heat_shock_Hsp33"/>
    <property type="match status" value="1"/>
</dbReference>
<dbReference type="SUPFAM" id="SSF64397">
    <property type="entry name" value="Hsp33 domain"/>
    <property type="match status" value="1"/>
</dbReference>
<dbReference type="SUPFAM" id="SSF118352">
    <property type="entry name" value="HSP33 redox switch-like"/>
    <property type="match status" value="1"/>
</dbReference>
<feature type="chain" id="PRO_1000015565" description="33 kDa chaperonin">
    <location>
        <begin position="1"/>
        <end position="288"/>
    </location>
</feature>
<feature type="disulfide bond" description="Redox-active" evidence="1">
    <location>
        <begin position="225"/>
        <end position="227"/>
    </location>
</feature>
<feature type="disulfide bond" description="Redox-active" evidence="1">
    <location>
        <begin position="258"/>
        <end position="261"/>
    </location>
</feature>
<keyword id="KW-0143">Chaperone</keyword>
<keyword id="KW-0963">Cytoplasm</keyword>
<keyword id="KW-1015">Disulfide bond</keyword>
<keyword id="KW-0676">Redox-active center</keyword>
<keyword id="KW-1185">Reference proteome</keyword>
<keyword id="KW-0862">Zinc</keyword>
<gene>
    <name evidence="1" type="primary">hslO</name>
    <name type="ordered locus">Sden_0118</name>
</gene>
<proteinExistence type="inferred from homology"/>
<protein>
    <recommendedName>
        <fullName evidence="1">33 kDa chaperonin</fullName>
    </recommendedName>
    <alternativeName>
        <fullName evidence="1">Heat shock protein 33 homolog</fullName>
        <shortName evidence="1">HSP33</shortName>
    </alternativeName>
</protein>
<organism>
    <name type="scientific">Shewanella denitrificans (strain OS217 / ATCC BAA-1090 / DSM 15013)</name>
    <dbReference type="NCBI Taxonomy" id="318161"/>
    <lineage>
        <taxon>Bacteria</taxon>
        <taxon>Pseudomonadati</taxon>
        <taxon>Pseudomonadota</taxon>
        <taxon>Gammaproteobacteria</taxon>
        <taxon>Alteromonadales</taxon>
        <taxon>Shewanellaceae</taxon>
        <taxon>Shewanella</taxon>
    </lineage>
</organism>
<reference key="1">
    <citation type="submission" date="2006-03" db="EMBL/GenBank/DDBJ databases">
        <title>Complete sequence of Shewanella denitrificans OS217.</title>
        <authorList>
            <consortium name="US DOE Joint Genome Institute"/>
            <person name="Copeland A."/>
            <person name="Lucas S."/>
            <person name="Lapidus A."/>
            <person name="Barry K."/>
            <person name="Detter J.C."/>
            <person name="Glavina del Rio T."/>
            <person name="Hammon N."/>
            <person name="Israni S."/>
            <person name="Dalin E."/>
            <person name="Tice H."/>
            <person name="Pitluck S."/>
            <person name="Brettin T."/>
            <person name="Bruce D."/>
            <person name="Han C."/>
            <person name="Tapia R."/>
            <person name="Gilna P."/>
            <person name="Kiss H."/>
            <person name="Schmutz J."/>
            <person name="Larimer F."/>
            <person name="Land M."/>
            <person name="Hauser L."/>
            <person name="Kyrpides N."/>
            <person name="Lykidis A."/>
            <person name="Richardson P."/>
        </authorList>
    </citation>
    <scope>NUCLEOTIDE SEQUENCE [LARGE SCALE GENOMIC DNA]</scope>
    <source>
        <strain>OS217 / ATCC BAA-1090 / DSM 15013</strain>
    </source>
</reference>
<evidence type="ECO:0000255" key="1">
    <source>
        <dbReference type="HAMAP-Rule" id="MF_00117"/>
    </source>
</evidence>
<name>HSLO_SHEDO</name>
<comment type="function">
    <text evidence="1">Redox regulated molecular chaperone. Protects both thermally unfolding and oxidatively damaged proteins from irreversible aggregation. Plays an important role in the bacterial defense system toward oxidative stress.</text>
</comment>
<comment type="subcellular location">
    <subcellularLocation>
        <location evidence="1">Cytoplasm</location>
    </subcellularLocation>
</comment>
<comment type="PTM">
    <text evidence="1">Under oxidizing conditions two disulfide bonds are formed involving the reactive cysteines. Under reducing conditions zinc is bound to the reactive cysteines and the protein is inactive.</text>
</comment>
<comment type="similarity">
    <text evidence="1">Belongs to the HSP33 family.</text>
</comment>
<sequence>MSRDILHRYLFDNADVRGQLVQLEDSFQAMLAAQDYPKALQVLLGELMAATSLLTATIKFSGDISVQLQGDGPVSLAVINGNNELQLRGVARWKGELAKDASLPTLLGKGYMVITLTPDEGERYQGIVSLEHGTLAACLEEYFNQSEQLPTQIHLFATNAQAAGMLLQVLPSKQEQNDDFSHLSVLTQTIKPQELFDLGAEEVLHRLYHEEEVRLFEPMDVSFKCTCSRERSAGALKTLSLVELETILAEEGKIDMGCEYCTASYSFDAIDIAALFSDNADTSQTKTQ</sequence>